<name>RL2_SHEPW</name>
<evidence type="ECO:0000255" key="1">
    <source>
        <dbReference type="HAMAP-Rule" id="MF_01320"/>
    </source>
</evidence>
<evidence type="ECO:0000256" key="2">
    <source>
        <dbReference type="SAM" id="MobiDB-lite"/>
    </source>
</evidence>
<evidence type="ECO:0000305" key="3"/>
<protein>
    <recommendedName>
        <fullName evidence="1">Large ribosomal subunit protein uL2</fullName>
    </recommendedName>
    <alternativeName>
        <fullName evidence="3">50S ribosomal protein L2</fullName>
    </alternativeName>
</protein>
<proteinExistence type="inferred from homology"/>
<comment type="function">
    <text evidence="1">One of the primary rRNA binding proteins. Required for association of the 30S and 50S subunits to form the 70S ribosome, for tRNA binding and peptide bond formation. It has been suggested to have peptidyltransferase activity; this is somewhat controversial. Makes several contacts with the 16S rRNA in the 70S ribosome.</text>
</comment>
<comment type="subunit">
    <text evidence="1">Part of the 50S ribosomal subunit. Forms a bridge to the 30S subunit in the 70S ribosome.</text>
</comment>
<comment type="similarity">
    <text evidence="1">Belongs to the universal ribosomal protein uL2 family.</text>
</comment>
<feature type="chain" id="PRO_1000141614" description="Large ribosomal subunit protein uL2">
    <location>
        <begin position="1"/>
        <end position="275"/>
    </location>
</feature>
<feature type="region of interest" description="Disordered" evidence="2">
    <location>
        <begin position="223"/>
        <end position="275"/>
    </location>
</feature>
<keyword id="KW-0687">Ribonucleoprotein</keyword>
<keyword id="KW-0689">Ribosomal protein</keyword>
<keyword id="KW-0694">RNA-binding</keyword>
<keyword id="KW-0699">rRNA-binding</keyword>
<sequence length="275" mass="29982">MAVIKCKPTSPGRRHVVKVVNSDLHKGKPFAGLLAKKSKSGGRNNTGRITSRHIGGGHKQHYRLIDFKRNKDGIPAKVERLEYDPNRTANIALVLYADGERRYIIAAKGMKAGDSIQSGIDAEIKSGNAMPLRNIPVGSVVHAVEMKPGKGAQIARSAGAYVQVIARDGAYATLRLRSGEMRKVPVDCRATLGEVGNAEHMLRQLGKAGAKRWRGVRPTVRGVAMNPVDHPHGGGEGRTSGGRHPVSPWGQPTKGYKTRSNKRTDKYIVRRRNKK</sequence>
<dbReference type="EMBL" id="CP000472">
    <property type="protein sequence ID" value="ACJ28770.1"/>
    <property type="molecule type" value="Genomic_DNA"/>
</dbReference>
<dbReference type="RefSeq" id="WP_020912142.1">
    <property type="nucleotide sequence ID" value="NC_011566.1"/>
</dbReference>
<dbReference type="SMR" id="B8CND6"/>
<dbReference type="STRING" id="225849.swp_2014"/>
<dbReference type="KEGG" id="swp:swp_2014"/>
<dbReference type="eggNOG" id="COG0090">
    <property type="taxonomic scope" value="Bacteria"/>
</dbReference>
<dbReference type="HOGENOM" id="CLU_036235_2_1_6"/>
<dbReference type="OrthoDB" id="9778722at2"/>
<dbReference type="Proteomes" id="UP000000753">
    <property type="component" value="Chromosome"/>
</dbReference>
<dbReference type="GO" id="GO:0015934">
    <property type="term" value="C:large ribosomal subunit"/>
    <property type="evidence" value="ECO:0007669"/>
    <property type="project" value="InterPro"/>
</dbReference>
<dbReference type="GO" id="GO:0019843">
    <property type="term" value="F:rRNA binding"/>
    <property type="evidence" value="ECO:0007669"/>
    <property type="project" value="UniProtKB-UniRule"/>
</dbReference>
<dbReference type="GO" id="GO:0003735">
    <property type="term" value="F:structural constituent of ribosome"/>
    <property type="evidence" value="ECO:0007669"/>
    <property type="project" value="InterPro"/>
</dbReference>
<dbReference type="GO" id="GO:0016740">
    <property type="term" value="F:transferase activity"/>
    <property type="evidence" value="ECO:0007669"/>
    <property type="project" value="InterPro"/>
</dbReference>
<dbReference type="GO" id="GO:0002181">
    <property type="term" value="P:cytoplasmic translation"/>
    <property type="evidence" value="ECO:0007669"/>
    <property type="project" value="TreeGrafter"/>
</dbReference>
<dbReference type="FunFam" id="2.30.30.30:FF:000001">
    <property type="entry name" value="50S ribosomal protein L2"/>
    <property type="match status" value="1"/>
</dbReference>
<dbReference type="FunFam" id="2.40.50.140:FF:000003">
    <property type="entry name" value="50S ribosomal protein L2"/>
    <property type="match status" value="1"/>
</dbReference>
<dbReference type="FunFam" id="4.10.950.10:FF:000001">
    <property type="entry name" value="50S ribosomal protein L2"/>
    <property type="match status" value="1"/>
</dbReference>
<dbReference type="Gene3D" id="2.30.30.30">
    <property type="match status" value="1"/>
</dbReference>
<dbReference type="Gene3D" id="2.40.50.140">
    <property type="entry name" value="Nucleic acid-binding proteins"/>
    <property type="match status" value="1"/>
</dbReference>
<dbReference type="Gene3D" id="4.10.950.10">
    <property type="entry name" value="Ribosomal protein L2, domain 3"/>
    <property type="match status" value="1"/>
</dbReference>
<dbReference type="HAMAP" id="MF_01320_B">
    <property type="entry name" value="Ribosomal_uL2_B"/>
    <property type="match status" value="1"/>
</dbReference>
<dbReference type="InterPro" id="IPR012340">
    <property type="entry name" value="NA-bd_OB-fold"/>
</dbReference>
<dbReference type="InterPro" id="IPR014722">
    <property type="entry name" value="Rib_uL2_dom2"/>
</dbReference>
<dbReference type="InterPro" id="IPR002171">
    <property type="entry name" value="Ribosomal_uL2"/>
</dbReference>
<dbReference type="InterPro" id="IPR005880">
    <property type="entry name" value="Ribosomal_uL2_bac/org-type"/>
</dbReference>
<dbReference type="InterPro" id="IPR022669">
    <property type="entry name" value="Ribosomal_uL2_C"/>
</dbReference>
<dbReference type="InterPro" id="IPR022671">
    <property type="entry name" value="Ribosomal_uL2_CS"/>
</dbReference>
<dbReference type="InterPro" id="IPR014726">
    <property type="entry name" value="Ribosomal_uL2_dom3"/>
</dbReference>
<dbReference type="InterPro" id="IPR022666">
    <property type="entry name" value="Ribosomal_uL2_RNA-bd_dom"/>
</dbReference>
<dbReference type="InterPro" id="IPR008991">
    <property type="entry name" value="Translation_prot_SH3-like_sf"/>
</dbReference>
<dbReference type="NCBIfam" id="TIGR01171">
    <property type="entry name" value="rplB_bact"/>
    <property type="match status" value="1"/>
</dbReference>
<dbReference type="PANTHER" id="PTHR13691:SF5">
    <property type="entry name" value="LARGE RIBOSOMAL SUBUNIT PROTEIN UL2M"/>
    <property type="match status" value="1"/>
</dbReference>
<dbReference type="PANTHER" id="PTHR13691">
    <property type="entry name" value="RIBOSOMAL PROTEIN L2"/>
    <property type="match status" value="1"/>
</dbReference>
<dbReference type="Pfam" id="PF00181">
    <property type="entry name" value="Ribosomal_L2"/>
    <property type="match status" value="1"/>
</dbReference>
<dbReference type="Pfam" id="PF03947">
    <property type="entry name" value="Ribosomal_L2_C"/>
    <property type="match status" value="1"/>
</dbReference>
<dbReference type="PIRSF" id="PIRSF002158">
    <property type="entry name" value="Ribosomal_L2"/>
    <property type="match status" value="1"/>
</dbReference>
<dbReference type="SMART" id="SM01383">
    <property type="entry name" value="Ribosomal_L2"/>
    <property type="match status" value="1"/>
</dbReference>
<dbReference type="SMART" id="SM01382">
    <property type="entry name" value="Ribosomal_L2_C"/>
    <property type="match status" value="1"/>
</dbReference>
<dbReference type="SUPFAM" id="SSF50249">
    <property type="entry name" value="Nucleic acid-binding proteins"/>
    <property type="match status" value="1"/>
</dbReference>
<dbReference type="SUPFAM" id="SSF50104">
    <property type="entry name" value="Translation proteins SH3-like domain"/>
    <property type="match status" value="1"/>
</dbReference>
<dbReference type="PROSITE" id="PS00467">
    <property type="entry name" value="RIBOSOMAL_L2"/>
    <property type="match status" value="1"/>
</dbReference>
<accession>B8CND6</accession>
<organism>
    <name type="scientific">Shewanella piezotolerans (strain WP3 / JCM 13877)</name>
    <dbReference type="NCBI Taxonomy" id="225849"/>
    <lineage>
        <taxon>Bacteria</taxon>
        <taxon>Pseudomonadati</taxon>
        <taxon>Pseudomonadota</taxon>
        <taxon>Gammaproteobacteria</taxon>
        <taxon>Alteromonadales</taxon>
        <taxon>Shewanellaceae</taxon>
        <taxon>Shewanella</taxon>
    </lineage>
</organism>
<reference key="1">
    <citation type="journal article" date="2008" name="PLoS ONE">
        <title>Environmental adaptation: genomic analysis of the piezotolerant and psychrotolerant deep-sea iron reducing bacterium Shewanella piezotolerans WP3.</title>
        <authorList>
            <person name="Wang F."/>
            <person name="Wang J."/>
            <person name="Jian H."/>
            <person name="Zhang B."/>
            <person name="Li S."/>
            <person name="Wang F."/>
            <person name="Zeng X."/>
            <person name="Gao L."/>
            <person name="Bartlett D.H."/>
            <person name="Yu J."/>
            <person name="Hu S."/>
            <person name="Xiao X."/>
        </authorList>
    </citation>
    <scope>NUCLEOTIDE SEQUENCE [LARGE SCALE GENOMIC DNA]</scope>
    <source>
        <strain>WP3 / JCM 13877</strain>
    </source>
</reference>
<gene>
    <name evidence="1" type="primary">rplB</name>
    <name type="ordered locus">swp_2014</name>
</gene>